<sequence length="325" mass="36917">MKNFSLWCDFIENSFLDNEFLNLLSHGINGATSNPAIFKNAILNSPIYKDKILKLKEKKTKDIYEELAISDIQKAADKLAPLFYQKNDGFISIEIDPRLHDNTTLSLGEAKRLYSAIGKENIMIKIPATKASYEVMYELMKNGISVNATLIFSLEQSQKCFEALNAGLVEFRKNNIALKEQNTRTPQAVISIFVSRFDRLLNPKAKEQNRIGILNANLAYNNIYSKNEPNIRALFASTGVKGDDLPKDYYIKELLFENSVNTAPLDAIEAFKGKMHFKKPLMNFEIYTELNQIISQSEREKACNDLLSDGLEQFCIAFEDILKAL</sequence>
<evidence type="ECO:0000255" key="1">
    <source>
        <dbReference type="HAMAP-Rule" id="MF_00493"/>
    </source>
</evidence>
<name>TAL_CAMJR</name>
<reference key="1">
    <citation type="journal article" date="2005" name="PLoS Biol.">
        <title>Major structural differences and novel potential virulence mechanisms from the genomes of multiple Campylobacter species.</title>
        <authorList>
            <person name="Fouts D.E."/>
            <person name="Mongodin E.F."/>
            <person name="Mandrell R.E."/>
            <person name="Miller W.G."/>
            <person name="Rasko D.A."/>
            <person name="Ravel J."/>
            <person name="Brinkac L.M."/>
            <person name="DeBoy R.T."/>
            <person name="Parker C.T."/>
            <person name="Daugherty S.C."/>
            <person name="Dodson R.J."/>
            <person name="Durkin A.S."/>
            <person name="Madupu R."/>
            <person name="Sullivan S.A."/>
            <person name="Shetty J.U."/>
            <person name="Ayodeji M.A."/>
            <person name="Shvartsbeyn A."/>
            <person name="Schatz M.C."/>
            <person name="Badger J.H."/>
            <person name="Fraser C.M."/>
            <person name="Nelson K.E."/>
        </authorList>
    </citation>
    <scope>NUCLEOTIDE SEQUENCE [LARGE SCALE GENOMIC DNA]</scope>
    <source>
        <strain>RM1221</strain>
    </source>
</reference>
<feature type="chain" id="PRO_1000026522" description="Transaldolase">
    <location>
        <begin position="1"/>
        <end position="325"/>
    </location>
</feature>
<feature type="active site" description="Schiff-base intermediate with substrate" evidence="1">
    <location>
        <position position="125"/>
    </location>
</feature>
<keyword id="KW-0963">Cytoplasm</keyword>
<keyword id="KW-0570">Pentose shunt</keyword>
<keyword id="KW-0704">Schiff base</keyword>
<keyword id="KW-0808">Transferase</keyword>
<gene>
    <name evidence="1" type="primary">tal</name>
    <name type="ordered locus">CJE0329</name>
</gene>
<proteinExistence type="inferred from homology"/>
<accession>Q5HWI6</accession>
<organism>
    <name type="scientific">Campylobacter jejuni (strain RM1221)</name>
    <dbReference type="NCBI Taxonomy" id="195099"/>
    <lineage>
        <taxon>Bacteria</taxon>
        <taxon>Pseudomonadati</taxon>
        <taxon>Campylobacterota</taxon>
        <taxon>Epsilonproteobacteria</taxon>
        <taxon>Campylobacterales</taxon>
        <taxon>Campylobacteraceae</taxon>
        <taxon>Campylobacter</taxon>
    </lineage>
</organism>
<comment type="function">
    <text evidence="1">Transaldolase is important for the balance of metabolites in the pentose-phosphate pathway.</text>
</comment>
<comment type="catalytic activity">
    <reaction evidence="1">
        <text>D-sedoheptulose 7-phosphate + D-glyceraldehyde 3-phosphate = D-erythrose 4-phosphate + beta-D-fructose 6-phosphate</text>
        <dbReference type="Rhea" id="RHEA:17053"/>
        <dbReference type="ChEBI" id="CHEBI:16897"/>
        <dbReference type="ChEBI" id="CHEBI:57483"/>
        <dbReference type="ChEBI" id="CHEBI:57634"/>
        <dbReference type="ChEBI" id="CHEBI:59776"/>
        <dbReference type="EC" id="2.2.1.2"/>
    </reaction>
</comment>
<comment type="pathway">
    <text evidence="1">Carbohydrate degradation; pentose phosphate pathway; D-glyceraldehyde 3-phosphate and beta-D-fructose 6-phosphate from D-ribose 5-phosphate and D-xylulose 5-phosphate (non-oxidative stage): step 2/3.</text>
</comment>
<comment type="subcellular location">
    <subcellularLocation>
        <location evidence="1">Cytoplasm</location>
    </subcellularLocation>
</comment>
<comment type="similarity">
    <text evidence="1">Belongs to the transaldolase family. Type 2 subfamily.</text>
</comment>
<protein>
    <recommendedName>
        <fullName evidence="1">Transaldolase</fullName>
        <ecNumber evidence="1">2.2.1.2</ecNumber>
    </recommendedName>
</protein>
<dbReference type="EC" id="2.2.1.2" evidence="1"/>
<dbReference type="EMBL" id="CP000025">
    <property type="protein sequence ID" value="AAW34919.1"/>
    <property type="molecule type" value="Genomic_DNA"/>
</dbReference>
<dbReference type="RefSeq" id="WP_002851728.1">
    <property type="nucleotide sequence ID" value="NC_003912.7"/>
</dbReference>
<dbReference type="SMR" id="Q5HWI6"/>
<dbReference type="KEGG" id="cjr:CJE0329"/>
<dbReference type="HOGENOM" id="CLU_050771_1_0_7"/>
<dbReference type="UniPathway" id="UPA00115">
    <property type="reaction ID" value="UER00414"/>
</dbReference>
<dbReference type="GO" id="GO:0005737">
    <property type="term" value="C:cytoplasm"/>
    <property type="evidence" value="ECO:0007669"/>
    <property type="project" value="UniProtKB-SubCell"/>
</dbReference>
<dbReference type="GO" id="GO:0004801">
    <property type="term" value="F:transaldolase activity"/>
    <property type="evidence" value="ECO:0007669"/>
    <property type="project" value="UniProtKB-UniRule"/>
</dbReference>
<dbReference type="GO" id="GO:0005975">
    <property type="term" value="P:carbohydrate metabolic process"/>
    <property type="evidence" value="ECO:0007669"/>
    <property type="project" value="InterPro"/>
</dbReference>
<dbReference type="GO" id="GO:0006098">
    <property type="term" value="P:pentose-phosphate shunt"/>
    <property type="evidence" value="ECO:0007669"/>
    <property type="project" value="UniProtKB-UniRule"/>
</dbReference>
<dbReference type="CDD" id="cd00955">
    <property type="entry name" value="Transaldolase_like"/>
    <property type="match status" value="1"/>
</dbReference>
<dbReference type="Gene3D" id="3.20.20.70">
    <property type="entry name" value="Aldolase class I"/>
    <property type="match status" value="1"/>
</dbReference>
<dbReference type="HAMAP" id="MF_00493">
    <property type="entry name" value="Transaldolase_2"/>
    <property type="match status" value="1"/>
</dbReference>
<dbReference type="InterPro" id="IPR013785">
    <property type="entry name" value="Aldolase_TIM"/>
</dbReference>
<dbReference type="InterPro" id="IPR001585">
    <property type="entry name" value="TAL/FSA"/>
</dbReference>
<dbReference type="InterPro" id="IPR004732">
    <property type="entry name" value="Transaldolase_2"/>
</dbReference>
<dbReference type="InterPro" id="IPR018225">
    <property type="entry name" value="Transaldolase_AS"/>
</dbReference>
<dbReference type="NCBIfam" id="NF003026">
    <property type="entry name" value="PRK03903.1"/>
    <property type="match status" value="1"/>
</dbReference>
<dbReference type="NCBIfam" id="TIGR00876">
    <property type="entry name" value="tal_mycobact"/>
    <property type="match status" value="1"/>
</dbReference>
<dbReference type="PANTHER" id="PTHR10683">
    <property type="entry name" value="TRANSALDOLASE"/>
    <property type="match status" value="1"/>
</dbReference>
<dbReference type="PANTHER" id="PTHR10683:SF31">
    <property type="entry name" value="TRANSALDOLASE"/>
    <property type="match status" value="1"/>
</dbReference>
<dbReference type="Pfam" id="PF00923">
    <property type="entry name" value="TAL_FSA"/>
    <property type="match status" value="1"/>
</dbReference>
<dbReference type="PIRSF" id="PIRSF036915">
    <property type="entry name" value="Trnald_Bac_Plnt"/>
    <property type="match status" value="1"/>
</dbReference>
<dbReference type="SUPFAM" id="SSF51569">
    <property type="entry name" value="Aldolase"/>
    <property type="match status" value="1"/>
</dbReference>
<dbReference type="PROSITE" id="PS01054">
    <property type="entry name" value="TRANSALDOLASE_1"/>
    <property type="match status" value="1"/>
</dbReference>